<dbReference type="EC" id="2.5.1.6" evidence="1"/>
<dbReference type="EMBL" id="AE000657">
    <property type="protein sequence ID" value="AAC07183.1"/>
    <property type="molecule type" value="Genomic_DNA"/>
</dbReference>
<dbReference type="PIR" id="C70399">
    <property type="entry name" value="C70399"/>
</dbReference>
<dbReference type="RefSeq" id="NP_213786.1">
    <property type="nucleotide sequence ID" value="NC_000918.1"/>
</dbReference>
<dbReference type="RefSeq" id="WP_010880724.1">
    <property type="nucleotide sequence ID" value="NC_000918.1"/>
</dbReference>
<dbReference type="SMR" id="O67222"/>
<dbReference type="FunCoup" id="O67222">
    <property type="interactions" value="453"/>
</dbReference>
<dbReference type="STRING" id="224324.aq_1154"/>
<dbReference type="EnsemblBacteria" id="AAC07183">
    <property type="protein sequence ID" value="AAC07183"/>
    <property type="gene ID" value="aq_1154"/>
</dbReference>
<dbReference type="KEGG" id="aae:aq_1154"/>
<dbReference type="PATRIC" id="fig|224324.8.peg.898"/>
<dbReference type="eggNOG" id="COG0192">
    <property type="taxonomic scope" value="Bacteria"/>
</dbReference>
<dbReference type="HOGENOM" id="CLU_041802_1_1_0"/>
<dbReference type="InParanoid" id="O67222"/>
<dbReference type="OrthoDB" id="9801686at2"/>
<dbReference type="UniPathway" id="UPA00315">
    <property type="reaction ID" value="UER00080"/>
</dbReference>
<dbReference type="Proteomes" id="UP000000798">
    <property type="component" value="Chromosome"/>
</dbReference>
<dbReference type="GO" id="GO:0005829">
    <property type="term" value="C:cytosol"/>
    <property type="evidence" value="ECO:0000318"/>
    <property type="project" value="GO_Central"/>
</dbReference>
<dbReference type="GO" id="GO:0005524">
    <property type="term" value="F:ATP binding"/>
    <property type="evidence" value="ECO:0007669"/>
    <property type="project" value="UniProtKB-UniRule"/>
</dbReference>
<dbReference type="GO" id="GO:0000287">
    <property type="term" value="F:magnesium ion binding"/>
    <property type="evidence" value="ECO:0007669"/>
    <property type="project" value="UniProtKB-UniRule"/>
</dbReference>
<dbReference type="GO" id="GO:0004478">
    <property type="term" value="F:methionine adenosyltransferase activity"/>
    <property type="evidence" value="ECO:0000318"/>
    <property type="project" value="GO_Central"/>
</dbReference>
<dbReference type="GO" id="GO:0006730">
    <property type="term" value="P:one-carbon metabolic process"/>
    <property type="evidence" value="ECO:0007669"/>
    <property type="project" value="UniProtKB-KW"/>
</dbReference>
<dbReference type="GO" id="GO:0006556">
    <property type="term" value="P:S-adenosylmethionine biosynthetic process"/>
    <property type="evidence" value="ECO:0000318"/>
    <property type="project" value="GO_Central"/>
</dbReference>
<dbReference type="CDD" id="cd18079">
    <property type="entry name" value="S-AdoMet_synt"/>
    <property type="match status" value="1"/>
</dbReference>
<dbReference type="FunFam" id="3.30.300.10:FF:000003">
    <property type="entry name" value="S-adenosylmethionine synthase"/>
    <property type="match status" value="1"/>
</dbReference>
<dbReference type="Gene3D" id="3.30.300.10">
    <property type="match status" value="3"/>
</dbReference>
<dbReference type="HAMAP" id="MF_00086">
    <property type="entry name" value="S_AdoMet_synth1"/>
    <property type="match status" value="1"/>
</dbReference>
<dbReference type="InterPro" id="IPR022630">
    <property type="entry name" value="S-AdoMet_synt_C"/>
</dbReference>
<dbReference type="InterPro" id="IPR022629">
    <property type="entry name" value="S-AdoMet_synt_central"/>
</dbReference>
<dbReference type="InterPro" id="IPR022628">
    <property type="entry name" value="S-AdoMet_synt_N"/>
</dbReference>
<dbReference type="InterPro" id="IPR002133">
    <property type="entry name" value="S-AdoMet_synthetase"/>
</dbReference>
<dbReference type="InterPro" id="IPR022636">
    <property type="entry name" value="S-AdoMet_synthetase_sfam"/>
</dbReference>
<dbReference type="NCBIfam" id="TIGR01034">
    <property type="entry name" value="metK"/>
    <property type="match status" value="1"/>
</dbReference>
<dbReference type="PANTHER" id="PTHR11964">
    <property type="entry name" value="S-ADENOSYLMETHIONINE SYNTHETASE"/>
    <property type="match status" value="1"/>
</dbReference>
<dbReference type="Pfam" id="PF02773">
    <property type="entry name" value="S-AdoMet_synt_C"/>
    <property type="match status" value="1"/>
</dbReference>
<dbReference type="Pfam" id="PF02772">
    <property type="entry name" value="S-AdoMet_synt_M"/>
    <property type="match status" value="1"/>
</dbReference>
<dbReference type="Pfam" id="PF00438">
    <property type="entry name" value="S-AdoMet_synt_N"/>
    <property type="match status" value="1"/>
</dbReference>
<dbReference type="PIRSF" id="PIRSF000497">
    <property type="entry name" value="MAT"/>
    <property type="match status" value="1"/>
</dbReference>
<dbReference type="SUPFAM" id="SSF55973">
    <property type="entry name" value="S-adenosylmethionine synthetase"/>
    <property type="match status" value="3"/>
</dbReference>
<sequence>MYNLRMAESVTEGHPDKIADQLADALLDEFIKKDPYSKVSLEIMVTTGLVMVGGELTTESYVDIPRVVRSVIKDIGYTRPELGFDADTCAVVQSIDEQSPEIALGISSEGAGDTAIVVGYATKEAPNLMPWPITIAHKITKRISEYRKIGKFPFLRPDGKVLVAMIYEDGKPSYVQSIVAYVHHDPDVSINHLRELIIEEIIKKEIPEEFLTEKTSIKVNPTGRFVIGGPVADTGLTGRKIVSDAYGDIGLSGGSAFSGKDPTKTDRSGSYLARMIAKHVVAGGWAERCLVQIGYAFGLTEPVAFDIETFGTEKISKEILEDAVKKVFPLRPAEIIEFLDLRKPIYRQTSVYGHFGKENLPWEKLTKLEELKELLD</sequence>
<organism>
    <name type="scientific">Aquifex aeolicus (strain VF5)</name>
    <dbReference type="NCBI Taxonomy" id="224324"/>
    <lineage>
        <taxon>Bacteria</taxon>
        <taxon>Pseudomonadati</taxon>
        <taxon>Aquificota</taxon>
        <taxon>Aquificia</taxon>
        <taxon>Aquificales</taxon>
        <taxon>Aquificaceae</taxon>
        <taxon>Aquifex</taxon>
    </lineage>
</organism>
<comment type="function">
    <text evidence="1">Catalyzes the formation of S-adenosylmethionine (AdoMet) from methionine and ATP. The overall synthetic reaction is composed of two sequential steps, AdoMet formation and the subsequent tripolyphosphate hydrolysis which occurs prior to release of AdoMet from the enzyme.</text>
</comment>
<comment type="catalytic activity">
    <reaction evidence="1">
        <text>L-methionine + ATP + H2O = S-adenosyl-L-methionine + phosphate + diphosphate</text>
        <dbReference type="Rhea" id="RHEA:21080"/>
        <dbReference type="ChEBI" id="CHEBI:15377"/>
        <dbReference type="ChEBI" id="CHEBI:30616"/>
        <dbReference type="ChEBI" id="CHEBI:33019"/>
        <dbReference type="ChEBI" id="CHEBI:43474"/>
        <dbReference type="ChEBI" id="CHEBI:57844"/>
        <dbReference type="ChEBI" id="CHEBI:59789"/>
        <dbReference type="EC" id="2.5.1.6"/>
    </reaction>
</comment>
<comment type="cofactor">
    <cofactor evidence="1">
        <name>Mg(2+)</name>
        <dbReference type="ChEBI" id="CHEBI:18420"/>
    </cofactor>
    <text evidence="1">Binds 2 divalent ions per subunit.</text>
</comment>
<comment type="cofactor">
    <cofactor evidence="1">
        <name>K(+)</name>
        <dbReference type="ChEBI" id="CHEBI:29103"/>
    </cofactor>
    <text evidence="1">Binds 1 potassium ion per subunit.</text>
</comment>
<comment type="pathway">
    <text evidence="1">Amino-acid biosynthesis; S-adenosyl-L-methionine biosynthesis; S-adenosyl-L-methionine from L-methionine: step 1/1.</text>
</comment>
<comment type="subunit">
    <text evidence="1">Homotetramer; dimer of dimers.</text>
</comment>
<comment type="subcellular location">
    <subcellularLocation>
        <location evidence="1">Cytoplasm</location>
    </subcellularLocation>
</comment>
<comment type="similarity">
    <text evidence="1">Belongs to the AdoMet synthase family.</text>
</comment>
<accession>O67222</accession>
<protein>
    <recommendedName>
        <fullName evidence="1">S-adenosylmethionine synthase</fullName>
        <shortName evidence="1">AdoMet synthase</shortName>
        <ecNumber evidence="1">2.5.1.6</ecNumber>
    </recommendedName>
    <alternativeName>
        <fullName evidence="1">MAT</fullName>
    </alternativeName>
    <alternativeName>
        <fullName evidence="1">Methionine adenosyltransferase</fullName>
    </alternativeName>
</protein>
<gene>
    <name evidence="1" type="primary">metK</name>
    <name type="ordered locus">aq_1154</name>
</gene>
<name>METK_AQUAE</name>
<proteinExistence type="inferred from homology"/>
<evidence type="ECO:0000255" key="1">
    <source>
        <dbReference type="HAMAP-Rule" id="MF_00086"/>
    </source>
</evidence>
<keyword id="KW-0067">ATP-binding</keyword>
<keyword id="KW-0963">Cytoplasm</keyword>
<keyword id="KW-0460">Magnesium</keyword>
<keyword id="KW-0479">Metal-binding</keyword>
<keyword id="KW-0547">Nucleotide-binding</keyword>
<keyword id="KW-0554">One-carbon metabolism</keyword>
<keyword id="KW-0630">Potassium</keyword>
<keyword id="KW-1185">Reference proteome</keyword>
<keyword id="KW-0808">Transferase</keyword>
<feature type="chain" id="PRO_0000174481" description="S-adenosylmethionine synthase">
    <location>
        <begin position="1"/>
        <end position="376"/>
    </location>
</feature>
<feature type="region of interest" description="Flexible loop" evidence="1">
    <location>
        <begin position="98"/>
        <end position="108"/>
    </location>
</feature>
<feature type="binding site" description="in other chain" evidence="1">
    <location>
        <position position="14"/>
    </location>
    <ligand>
        <name>ATP</name>
        <dbReference type="ChEBI" id="CHEBI:30616"/>
        <note>ligand shared between two neighboring subunits</note>
    </ligand>
</feature>
<feature type="binding site" evidence="1">
    <location>
        <position position="16"/>
    </location>
    <ligand>
        <name>Mg(2+)</name>
        <dbReference type="ChEBI" id="CHEBI:18420"/>
    </ligand>
</feature>
<feature type="binding site" evidence="1">
    <location>
        <position position="42"/>
    </location>
    <ligand>
        <name>K(+)</name>
        <dbReference type="ChEBI" id="CHEBI:29103"/>
    </ligand>
</feature>
<feature type="binding site" description="in other chain" evidence="1">
    <location>
        <position position="55"/>
    </location>
    <ligand>
        <name>L-methionine</name>
        <dbReference type="ChEBI" id="CHEBI:57844"/>
        <note>ligand shared between two neighboring subunits</note>
    </ligand>
</feature>
<feature type="binding site" description="in other chain" evidence="1">
    <location>
        <position position="98"/>
    </location>
    <ligand>
        <name>L-methionine</name>
        <dbReference type="ChEBI" id="CHEBI:57844"/>
        <note>ligand shared between two neighboring subunits</note>
    </ligand>
</feature>
<feature type="binding site" description="in other chain" evidence="1">
    <location>
        <begin position="158"/>
        <end position="160"/>
    </location>
    <ligand>
        <name>ATP</name>
        <dbReference type="ChEBI" id="CHEBI:30616"/>
        <note>ligand shared between two neighboring subunits</note>
    </ligand>
</feature>
<feature type="binding site" description="in other chain" evidence="1">
    <location>
        <begin position="224"/>
        <end position="225"/>
    </location>
    <ligand>
        <name>ATP</name>
        <dbReference type="ChEBI" id="CHEBI:30616"/>
        <note>ligand shared between two neighboring subunits</note>
    </ligand>
</feature>
<feature type="binding site" evidence="1">
    <location>
        <position position="233"/>
    </location>
    <ligand>
        <name>ATP</name>
        <dbReference type="ChEBI" id="CHEBI:30616"/>
        <note>ligand shared between two neighboring subunits</note>
    </ligand>
</feature>
<feature type="binding site" evidence="1">
    <location>
        <position position="233"/>
    </location>
    <ligand>
        <name>L-methionine</name>
        <dbReference type="ChEBI" id="CHEBI:57844"/>
        <note>ligand shared between two neighboring subunits</note>
    </ligand>
</feature>
<feature type="binding site" description="in other chain" evidence="1">
    <location>
        <begin position="239"/>
        <end position="240"/>
    </location>
    <ligand>
        <name>ATP</name>
        <dbReference type="ChEBI" id="CHEBI:30616"/>
        <note>ligand shared between two neighboring subunits</note>
    </ligand>
</feature>
<feature type="binding site" evidence="1">
    <location>
        <position position="256"/>
    </location>
    <ligand>
        <name>ATP</name>
        <dbReference type="ChEBI" id="CHEBI:30616"/>
        <note>ligand shared between two neighboring subunits</note>
    </ligand>
</feature>
<feature type="binding site" evidence="1">
    <location>
        <position position="260"/>
    </location>
    <ligand>
        <name>ATP</name>
        <dbReference type="ChEBI" id="CHEBI:30616"/>
        <note>ligand shared between two neighboring subunits</note>
    </ligand>
</feature>
<feature type="binding site" description="in other chain" evidence="1">
    <location>
        <position position="264"/>
    </location>
    <ligand>
        <name>L-methionine</name>
        <dbReference type="ChEBI" id="CHEBI:57844"/>
        <note>ligand shared between two neighboring subunits</note>
    </ligand>
</feature>
<reference key="1">
    <citation type="journal article" date="1998" name="Nature">
        <title>The complete genome of the hyperthermophilic bacterium Aquifex aeolicus.</title>
        <authorList>
            <person name="Deckert G."/>
            <person name="Warren P.V."/>
            <person name="Gaasterland T."/>
            <person name="Young W.G."/>
            <person name="Lenox A.L."/>
            <person name="Graham D.E."/>
            <person name="Overbeek R."/>
            <person name="Snead M.A."/>
            <person name="Keller M."/>
            <person name="Aujay M."/>
            <person name="Huber R."/>
            <person name="Feldman R.A."/>
            <person name="Short J.M."/>
            <person name="Olsen G.J."/>
            <person name="Swanson R.V."/>
        </authorList>
    </citation>
    <scope>NUCLEOTIDE SEQUENCE [LARGE SCALE GENOMIC DNA]</scope>
    <source>
        <strain>VF5</strain>
    </source>
</reference>